<evidence type="ECO:0000255" key="1">
    <source>
        <dbReference type="HAMAP-Rule" id="MF_01151"/>
    </source>
</evidence>
<evidence type="ECO:0000256" key="2">
    <source>
        <dbReference type="SAM" id="MobiDB-lite"/>
    </source>
</evidence>
<reference key="1">
    <citation type="journal article" date="2003" name="Genome Res.">
        <title>Genome sequence of an M3 strain of Streptococcus pyogenes reveals a large-scale genomic rearrangement in invasive strains and new insights into phage evolution.</title>
        <authorList>
            <person name="Nakagawa I."/>
            <person name="Kurokawa K."/>
            <person name="Yamashita A."/>
            <person name="Nakata M."/>
            <person name="Tomiyasu Y."/>
            <person name="Okahashi N."/>
            <person name="Kawabata S."/>
            <person name="Yamazaki K."/>
            <person name="Shiba T."/>
            <person name="Yasunaga T."/>
            <person name="Hayashi H."/>
            <person name="Hattori M."/>
            <person name="Hamada S."/>
        </authorList>
    </citation>
    <scope>NUCLEOTIDE SEQUENCE [LARGE SCALE GENOMIC DNA]</scope>
    <source>
        <strain>SSI-1</strain>
    </source>
</reference>
<gene>
    <name evidence="1" type="primary">grpE</name>
    <name type="ordered locus">SPs0334</name>
</gene>
<dbReference type="EMBL" id="BA000034">
    <property type="protein sequence ID" value="BAC63429.1"/>
    <property type="molecule type" value="Genomic_DNA"/>
</dbReference>
<dbReference type="RefSeq" id="WP_002983313.1">
    <property type="nucleotide sequence ID" value="NC_004606.1"/>
</dbReference>
<dbReference type="SMR" id="P0DB49"/>
<dbReference type="GeneID" id="69900393"/>
<dbReference type="KEGG" id="sps:SPs0334"/>
<dbReference type="HOGENOM" id="CLU_057217_6_3_9"/>
<dbReference type="GO" id="GO:0005737">
    <property type="term" value="C:cytoplasm"/>
    <property type="evidence" value="ECO:0007669"/>
    <property type="project" value="UniProtKB-SubCell"/>
</dbReference>
<dbReference type="GO" id="GO:0000774">
    <property type="term" value="F:adenyl-nucleotide exchange factor activity"/>
    <property type="evidence" value="ECO:0007669"/>
    <property type="project" value="InterPro"/>
</dbReference>
<dbReference type="GO" id="GO:0042803">
    <property type="term" value="F:protein homodimerization activity"/>
    <property type="evidence" value="ECO:0007669"/>
    <property type="project" value="InterPro"/>
</dbReference>
<dbReference type="GO" id="GO:0051087">
    <property type="term" value="F:protein-folding chaperone binding"/>
    <property type="evidence" value="ECO:0007669"/>
    <property type="project" value="InterPro"/>
</dbReference>
<dbReference type="GO" id="GO:0051082">
    <property type="term" value="F:unfolded protein binding"/>
    <property type="evidence" value="ECO:0007669"/>
    <property type="project" value="TreeGrafter"/>
</dbReference>
<dbReference type="GO" id="GO:0006457">
    <property type="term" value="P:protein folding"/>
    <property type="evidence" value="ECO:0007669"/>
    <property type="project" value="InterPro"/>
</dbReference>
<dbReference type="CDD" id="cd00446">
    <property type="entry name" value="GrpE"/>
    <property type="match status" value="1"/>
</dbReference>
<dbReference type="Gene3D" id="3.90.20.20">
    <property type="match status" value="1"/>
</dbReference>
<dbReference type="Gene3D" id="2.30.22.10">
    <property type="entry name" value="Head domain of nucleotide exchange factor GrpE"/>
    <property type="match status" value="1"/>
</dbReference>
<dbReference type="HAMAP" id="MF_01151">
    <property type="entry name" value="GrpE"/>
    <property type="match status" value="1"/>
</dbReference>
<dbReference type="InterPro" id="IPR000740">
    <property type="entry name" value="GrpE"/>
</dbReference>
<dbReference type="InterPro" id="IPR013805">
    <property type="entry name" value="GrpE_coiled_coil"/>
</dbReference>
<dbReference type="InterPro" id="IPR009012">
    <property type="entry name" value="GrpE_head"/>
</dbReference>
<dbReference type="NCBIfam" id="NF010738">
    <property type="entry name" value="PRK14140.1"/>
    <property type="match status" value="1"/>
</dbReference>
<dbReference type="NCBIfam" id="NF010753">
    <property type="entry name" value="PRK14156.1"/>
    <property type="match status" value="1"/>
</dbReference>
<dbReference type="PANTHER" id="PTHR21237">
    <property type="entry name" value="GRPE PROTEIN"/>
    <property type="match status" value="1"/>
</dbReference>
<dbReference type="PANTHER" id="PTHR21237:SF23">
    <property type="entry name" value="GRPE PROTEIN HOMOLOG, MITOCHONDRIAL"/>
    <property type="match status" value="1"/>
</dbReference>
<dbReference type="Pfam" id="PF01025">
    <property type="entry name" value="GrpE"/>
    <property type="match status" value="1"/>
</dbReference>
<dbReference type="PRINTS" id="PR00773">
    <property type="entry name" value="GRPEPROTEIN"/>
</dbReference>
<dbReference type="SUPFAM" id="SSF58014">
    <property type="entry name" value="Coiled-coil domain of nucleotide exchange factor GrpE"/>
    <property type="match status" value="1"/>
</dbReference>
<dbReference type="SUPFAM" id="SSF51064">
    <property type="entry name" value="Head domain of nucleotide exchange factor GrpE"/>
    <property type="match status" value="1"/>
</dbReference>
<dbReference type="PROSITE" id="PS01071">
    <property type="entry name" value="GRPE"/>
    <property type="match status" value="1"/>
</dbReference>
<accession>P0DB49</accession>
<accession>P63192</accession>
<accession>P82581</accession>
<accession>Q99YC8</accession>
<keyword id="KW-0143">Chaperone</keyword>
<keyword id="KW-0963">Cytoplasm</keyword>
<keyword id="KW-0346">Stress response</keyword>
<organism>
    <name type="scientific">Streptococcus pyogenes serotype M3 (strain SSI-1)</name>
    <dbReference type="NCBI Taxonomy" id="193567"/>
    <lineage>
        <taxon>Bacteria</taxon>
        <taxon>Bacillati</taxon>
        <taxon>Bacillota</taxon>
        <taxon>Bacilli</taxon>
        <taxon>Lactobacillales</taxon>
        <taxon>Streptococcaceae</taxon>
        <taxon>Streptococcus</taxon>
    </lineage>
</organism>
<protein>
    <recommendedName>
        <fullName evidence="1">Protein GrpE</fullName>
    </recommendedName>
    <alternativeName>
        <fullName evidence="1">HSP-70 cofactor</fullName>
    </alternativeName>
</protein>
<name>GRPE_STRPQ</name>
<feature type="chain" id="PRO_0000411362" description="Protein GrpE">
    <location>
        <begin position="1"/>
        <end position="190"/>
    </location>
</feature>
<feature type="region of interest" description="Disordered" evidence="2">
    <location>
        <begin position="21"/>
        <end position="49"/>
    </location>
</feature>
<feature type="compositionally biased region" description="Acidic residues" evidence="2">
    <location>
        <begin position="23"/>
        <end position="42"/>
    </location>
</feature>
<comment type="function">
    <text evidence="1">Participates actively in the response to hyperosmotic and heat shock by preventing the aggregation of stress-denatured proteins, in association with DnaK and GrpE. It is the nucleotide exchange factor for DnaK and may function as a thermosensor. Unfolded proteins bind initially to DnaJ; upon interaction with the DnaJ-bound protein, DnaK hydrolyzes its bound ATP, resulting in the formation of a stable complex. GrpE releases ADP from DnaK; ATP binding to DnaK triggers the release of the substrate protein, thus completing the reaction cycle. Several rounds of ATP-dependent interactions between DnaJ, DnaK and GrpE are required for fully efficient folding.</text>
</comment>
<comment type="subunit">
    <text evidence="1">Homodimer.</text>
</comment>
<comment type="subcellular location">
    <subcellularLocation>
        <location evidence="1">Cytoplasm</location>
    </subcellularLocation>
</comment>
<comment type="similarity">
    <text evidence="1">Belongs to the GrpE family.</text>
</comment>
<sequence length="190" mass="22055">MAVFNKLFKRRHSVSEEIKKDDLQEEVEATETEETVEEVIEETPEKSELELANERADEFENKYLRAHAEMQNIQRRSSEERQQLQRYRSQDLAKAILPSLDNLERALAVEGLTDDVKKGLEMTRDSLIQALKEEGVEEVEVDSFDHNFHMAVQTLPADDEHPADSIAEVFQKGYKLHERLLRPAMVVVYN</sequence>
<proteinExistence type="inferred from homology"/>